<name>HNRDL_HUMAN</name>
<organism>
    <name type="scientific">Homo sapiens</name>
    <name type="common">Human</name>
    <dbReference type="NCBI Taxonomy" id="9606"/>
    <lineage>
        <taxon>Eukaryota</taxon>
        <taxon>Metazoa</taxon>
        <taxon>Chordata</taxon>
        <taxon>Craniata</taxon>
        <taxon>Vertebrata</taxon>
        <taxon>Euteleostomi</taxon>
        <taxon>Mammalia</taxon>
        <taxon>Eutheria</taxon>
        <taxon>Euarchontoglires</taxon>
        <taxon>Primates</taxon>
        <taxon>Haplorrhini</taxon>
        <taxon>Catarrhini</taxon>
        <taxon>Hominidae</taxon>
        <taxon>Homo</taxon>
    </lineage>
</organism>
<proteinExistence type="evidence at protein level"/>
<keyword id="KW-0002">3D-structure</keyword>
<keyword id="KW-0007">Acetylation</keyword>
<keyword id="KW-0010">Activator</keyword>
<keyword id="KW-0025">Alternative splicing</keyword>
<keyword id="KW-0963">Cytoplasm</keyword>
<keyword id="KW-0903">Direct protein sequencing</keyword>
<keyword id="KW-0225">Disease variant</keyword>
<keyword id="KW-0238">DNA-binding</keyword>
<keyword id="KW-1017">Isopeptide bond</keyword>
<keyword id="KW-0947">Limb-girdle muscular dystrophy</keyword>
<keyword id="KW-0488">Methylation</keyword>
<keyword id="KW-0539">Nucleus</keyword>
<keyword id="KW-0597">Phosphoprotein</keyword>
<keyword id="KW-1267">Proteomics identification</keyword>
<keyword id="KW-1185">Reference proteome</keyword>
<keyword id="KW-0677">Repeat</keyword>
<keyword id="KW-0678">Repressor</keyword>
<keyword id="KW-0694">RNA-binding</keyword>
<keyword id="KW-0804">Transcription</keyword>
<keyword id="KW-0805">Transcription regulation</keyword>
<keyword id="KW-0832">Ubl conjugation</keyword>
<feature type="chain" id="PRO_0000287239" description="Heterogeneous nuclear ribonucleoprotein D-like">
    <location>
        <begin position="1"/>
        <end position="420"/>
    </location>
</feature>
<feature type="domain" description="RRM 1" evidence="3">
    <location>
        <begin position="148"/>
        <end position="230"/>
    </location>
</feature>
<feature type="domain" description="RRM 2" evidence="3">
    <location>
        <begin position="233"/>
        <end position="312"/>
    </location>
</feature>
<feature type="region of interest" description="Disordered" evidence="4">
    <location>
        <begin position="1"/>
        <end position="83"/>
    </location>
</feature>
<feature type="region of interest" description="Disordered" evidence="4">
    <location>
        <begin position="96"/>
        <end position="120"/>
    </location>
</feature>
<feature type="region of interest" description="Disordered" evidence="4">
    <location>
        <begin position="313"/>
        <end position="348"/>
    </location>
</feature>
<feature type="region of interest" description="Necessary for interaction with TNPO1" evidence="9">
    <location>
        <begin position="342"/>
        <end position="420"/>
    </location>
</feature>
<feature type="region of interest" description="Necessary for its nuclear import and export">
    <location>
        <begin position="396"/>
        <end position="420"/>
    </location>
</feature>
<feature type="region of interest" description="Disordered" evidence="4">
    <location>
        <begin position="398"/>
        <end position="420"/>
    </location>
</feature>
<feature type="compositionally biased region" description="Low complexity" evidence="4">
    <location>
        <begin position="36"/>
        <end position="52"/>
    </location>
</feature>
<feature type="compositionally biased region" description="Gly residues" evidence="4">
    <location>
        <begin position="323"/>
        <end position="342"/>
    </location>
</feature>
<feature type="modified residue" description="Omega-N-methylarginine" evidence="22">
    <location>
        <position position="25"/>
    </location>
</feature>
<feature type="modified residue" description="N6-methyllysine" evidence="11">
    <location>
        <position position="161"/>
    </location>
</feature>
<feature type="modified residue" description="N6-acetyllysine" evidence="17">
    <location>
        <position position="216"/>
    </location>
</feature>
<feature type="modified residue" description="Phosphoserine" evidence="16 18 19 20 21 23">
    <location>
        <position position="241"/>
    </location>
</feature>
<feature type="modified residue" description="Dimethylated arginine; alternate" evidence="11">
    <location>
        <position position="408"/>
    </location>
</feature>
<feature type="modified residue" description="Omega-N-methylarginine; alternate" evidence="2">
    <location>
        <position position="408"/>
    </location>
</feature>
<feature type="cross-link" description="Glycyl lysine isopeptide (Lys-Gly) (interchain with G-Cter in SUMO2)" evidence="24">
    <location>
        <position position="209"/>
    </location>
</feature>
<feature type="splice variant" id="VSP_025410" description="In isoform 2 and isoform 3." evidence="12 13 14">
    <location>
        <begin position="1"/>
        <end position="119"/>
    </location>
</feature>
<feature type="splice variant" id="VSP_025411" description="In isoform 3." evidence="13">
    <location>
        <begin position="341"/>
        <end position="397"/>
    </location>
</feature>
<feature type="sequence variant" id="VAR_072567" description="In LGMDD3; dbSNP:rs587777669." evidence="8">
    <original>D</original>
    <variation>H</variation>
    <location>
        <position position="378"/>
    </location>
</feature>
<feature type="sequence variant" id="VAR_072568" description="In LGMDD3; dbSNP:rs587777669." evidence="8">
    <original>D</original>
    <variation>N</variation>
    <location>
        <position position="378"/>
    </location>
</feature>
<feature type="mutagenesis site" description="Reduces significantly its nuclear localization." evidence="9">
    <original>G</original>
    <variation>A</variation>
    <location>
        <position position="404"/>
    </location>
</feature>
<feature type="strand" evidence="25">
    <location>
        <begin position="358"/>
        <end position="362"/>
    </location>
</feature>
<feature type="strand" evidence="25">
    <location>
        <begin position="369"/>
        <end position="371"/>
    </location>
</feature>
<feature type="strand" evidence="25">
    <location>
        <begin position="376"/>
        <end position="378"/>
    </location>
</feature>
<feature type="strand" evidence="25">
    <location>
        <begin position="380"/>
        <end position="383"/>
    </location>
</feature>
<feature type="strand" evidence="25">
    <location>
        <begin position="388"/>
        <end position="394"/>
    </location>
</feature>
<protein>
    <recommendedName>
        <fullName>Heterogeneous nuclear ribonucleoprotein D-like</fullName>
        <shortName>hnRNP D-like</shortName>
        <shortName>hnRNP DL</shortName>
    </recommendedName>
    <alternativeName>
        <fullName>AU-rich element RNA-binding factor</fullName>
    </alternativeName>
    <alternativeName>
        <fullName>JKT41-binding protein</fullName>
    </alternativeName>
    <alternativeName>
        <fullName>Protein laAUF1</fullName>
    </alternativeName>
</protein>
<dbReference type="EMBL" id="AB017019">
    <property type="protein sequence ID" value="BAA75241.1"/>
    <property type="molecule type" value="mRNA"/>
</dbReference>
<dbReference type="EMBL" id="D89092">
    <property type="protein sequence ID" value="BAA24361.1"/>
    <property type="molecule type" value="mRNA"/>
</dbReference>
<dbReference type="EMBL" id="AB066484">
    <property type="protein sequence ID" value="BAB62188.1"/>
    <property type="molecule type" value="mRNA"/>
</dbReference>
<dbReference type="EMBL" id="CR407623">
    <property type="protein sequence ID" value="CAG28551.1"/>
    <property type="molecule type" value="mRNA"/>
</dbReference>
<dbReference type="EMBL" id="AC124016">
    <property type="protein sequence ID" value="AAY40914.1"/>
    <property type="molecule type" value="Genomic_DNA"/>
</dbReference>
<dbReference type="EMBL" id="AB017018">
    <property type="protein sequence ID" value="BAA75239.1"/>
    <property type="molecule type" value="Genomic_DNA"/>
</dbReference>
<dbReference type="EMBL" id="AB017018">
    <property type="protein sequence ID" value="BAA75240.1"/>
    <property type="molecule type" value="Genomic_DNA"/>
</dbReference>
<dbReference type="EMBL" id="BC007392">
    <property type="protein sequence ID" value="AAH07392.2"/>
    <property type="molecule type" value="mRNA"/>
</dbReference>
<dbReference type="EMBL" id="BC011714">
    <property type="protein sequence ID" value="AAH11714.1"/>
    <property type="molecule type" value="mRNA"/>
</dbReference>
<dbReference type="EMBL" id="BC071944">
    <property type="protein sequence ID" value="AAH71944.1"/>
    <property type="molecule type" value="mRNA"/>
</dbReference>
<dbReference type="EMBL" id="AY453824">
    <property type="protein sequence ID" value="AAR17782.1"/>
    <property type="molecule type" value="mRNA"/>
</dbReference>
<dbReference type="EMBL" id="D89678">
    <property type="protein sequence ID" value="BAA22860.1"/>
    <property type="status" value="ALT_INIT"/>
    <property type="molecule type" value="mRNA"/>
</dbReference>
<dbReference type="CCDS" id="CCDS3593.1">
    <molecule id="O14979-1"/>
</dbReference>
<dbReference type="PIR" id="JW0079">
    <property type="entry name" value="JW0079"/>
</dbReference>
<dbReference type="RefSeq" id="NP_001193929.1">
    <property type="nucleotide sequence ID" value="NM_001207000.1"/>
</dbReference>
<dbReference type="RefSeq" id="NP_112740.1">
    <molecule id="O14979-1"/>
    <property type="nucleotide sequence ID" value="NM_031372.4"/>
</dbReference>
<dbReference type="PDB" id="7ZIR">
    <property type="method" value="EM"/>
    <property type="resolution" value="2.50 A"/>
    <property type="chains" value="A/B/C/D/E=121-420"/>
</dbReference>
<dbReference type="PDBsum" id="7ZIR"/>
<dbReference type="EMDB" id="EMD-14738"/>
<dbReference type="SMR" id="O14979"/>
<dbReference type="BioGRID" id="115308">
    <property type="interactions" value="384"/>
</dbReference>
<dbReference type="CORUM" id="O14979"/>
<dbReference type="FunCoup" id="O14979">
    <property type="interactions" value="3959"/>
</dbReference>
<dbReference type="IntAct" id="O14979">
    <property type="interactions" value="160"/>
</dbReference>
<dbReference type="MINT" id="O14979"/>
<dbReference type="STRING" id="9606.ENSP00000483254"/>
<dbReference type="GlyGen" id="O14979">
    <property type="glycosylation" value="1 site, 1 O-linked glycan (1 site)"/>
</dbReference>
<dbReference type="iPTMnet" id="O14979"/>
<dbReference type="MetOSite" id="O14979"/>
<dbReference type="PhosphoSitePlus" id="O14979"/>
<dbReference type="SwissPalm" id="O14979"/>
<dbReference type="BioMuta" id="HNRNPDL"/>
<dbReference type="jPOST" id="O14979"/>
<dbReference type="MassIVE" id="O14979"/>
<dbReference type="PaxDb" id="9606-ENSP00000483254"/>
<dbReference type="PeptideAtlas" id="O14979"/>
<dbReference type="ProteomicsDB" id="48353">
    <molecule id="O14979-1"/>
</dbReference>
<dbReference type="ProteomicsDB" id="48354">
    <molecule id="O14979-2"/>
</dbReference>
<dbReference type="ProteomicsDB" id="48355">
    <molecule id="O14979-3"/>
</dbReference>
<dbReference type="Pumba" id="O14979"/>
<dbReference type="Antibodypedia" id="25039">
    <property type="antibodies" value="160 antibodies from 24 providers"/>
</dbReference>
<dbReference type="DNASU" id="9987"/>
<dbReference type="Ensembl" id="ENST00000295470.10">
    <molecule id="O14979-1"/>
    <property type="protein sequence ID" value="ENSP00000295470.5"/>
    <property type="gene ID" value="ENSG00000152795.18"/>
</dbReference>
<dbReference type="Ensembl" id="ENST00000349655.8">
    <molecule id="O14979-2"/>
    <property type="protein sequence ID" value="ENSP00000338552.5"/>
    <property type="gene ID" value="ENSG00000152795.18"/>
</dbReference>
<dbReference type="Ensembl" id="ENST00000502762.4">
    <molecule id="O14979-1"/>
    <property type="protein sequence ID" value="ENSP00000422040.1"/>
    <property type="gene ID" value="ENSG00000152795.18"/>
</dbReference>
<dbReference type="Ensembl" id="ENST00000507721.5">
    <molecule id="O14979-2"/>
    <property type="protein sequence ID" value="ENSP00000480156.1"/>
    <property type="gene ID" value="ENSG00000152795.18"/>
</dbReference>
<dbReference type="Ensembl" id="ENST00000602300.5">
    <molecule id="O14979-2"/>
    <property type="protein sequence ID" value="ENSP00000473677.1"/>
    <property type="gene ID" value="ENSG00000152795.18"/>
</dbReference>
<dbReference type="Ensembl" id="ENST00000621267.4">
    <molecule id="O14979-1"/>
    <property type="protein sequence ID" value="ENSP00000483254.1"/>
    <property type="gene ID" value="ENSG00000152795.18"/>
</dbReference>
<dbReference type="Ensembl" id="ENST00000630114.2">
    <molecule id="O14979-2"/>
    <property type="protein sequence ID" value="ENSP00000486452.1"/>
    <property type="gene ID" value="ENSG00000152795.18"/>
</dbReference>
<dbReference type="Ensembl" id="ENST00000630827.1">
    <molecule id="O14979-2"/>
    <property type="protein sequence ID" value="ENSP00000485954.1"/>
    <property type="gene ID" value="ENSG00000152795.18"/>
</dbReference>
<dbReference type="GeneID" id="9987"/>
<dbReference type="KEGG" id="hsa:9987"/>
<dbReference type="MANE-Select" id="ENST00000295470.10">
    <property type="protein sequence ID" value="ENSP00000295470.5"/>
    <property type="RefSeq nucleotide sequence ID" value="NM_031372.4"/>
    <property type="RefSeq protein sequence ID" value="NP_112740.1"/>
</dbReference>
<dbReference type="UCSC" id="uc003hmr.4">
    <molecule id="O14979-1"/>
    <property type="organism name" value="human"/>
</dbReference>
<dbReference type="AGR" id="HGNC:5037"/>
<dbReference type="CTD" id="9987"/>
<dbReference type="DisGeNET" id="9987"/>
<dbReference type="GeneCards" id="HNRNPDL"/>
<dbReference type="HGNC" id="HGNC:5037">
    <property type="gene designation" value="HNRNPDL"/>
</dbReference>
<dbReference type="HPA" id="ENSG00000152795">
    <property type="expression patterns" value="Low tissue specificity"/>
</dbReference>
<dbReference type="MalaCards" id="HNRNPDL"/>
<dbReference type="MIM" id="607137">
    <property type="type" value="gene"/>
</dbReference>
<dbReference type="MIM" id="609115">
    <property type="type" value="phenotype"/>
</dbReference>
<dbReference type="neXtProt" id="NX_O14979"/>
<dbReference type="OpenTargets" id="ENSG00000152795"/>
<dbReference type="Orphanet" id="55596">
    <property type="disease" value="HNRNPDL-related limb-girdle muscular dystrophy D3"/>
</dbReference>
<dbReference type="PharmGKB" id="PA29362"/>
<dbReference type="VEuPathDB" id="HostDB:ENSG00000152795"/>
<dbReference type="eggNOG" id="KOG0118">
    <property type="taxonomic scope" value="Eukaryota"/>
</dbReference>
<dbReference type="GeneTree" id="ENSGT00940000154426"/>
<dbReference type="HOGENOM" id="CLU_012062_1_1_1"/>
<dbReference type="InParanoid" id="O14979"/>
<dbReference type="OMA" id="QVDTEMN"/>
<dbReference type="OrthoDB" id="1875751at2759"/>
<dbReference type="PAN-GO" id="O14979">
    <property type="GO annotations" value="4 GO annotations based on evolutionary models"/>
</dbReference>
<dbReference type="PhylomeDB" id="O14979"/>
<dbReference type="TreeFam" id="TF314808"/>
<dbReference type="PathwayCommons" id="O14979"/>
<dbReference type="Reactome" id="R-HSA-8950505">
    <property type="pathway name" value="Gene and protein expression by JAK-STAT signaling after Interleukin-12 stimulation"/>
</dbReference>
<dbReference type="SignaLink" id="O14979"/>
<dbReference type="BioGRID-ORCS" id="9987">
    <property type="hits" value="19 hits in 1107 CRISPR screens"/>
</dbReference>
<dbReference type="CD-CODE" id="232F8A39">
    <property type="entry name" value="P-body"/>
</dbReference>
<dbReference type="CD-CODE" id="91857CE7">
    <property type="entry name" value="Nucleolus"/>
</dbReference>
<dbReference type="CD-CODE" id="D0F20FEF">
    <property type="entry name" value="Synthetic Condensate 000090"/>
</dbReference>
<dbReference type="CD-CODE" id="DEE660B4">
    <property type="entry name" value="Stress granule"/>
</dbReference>
<dbReference type="ChiTaRS" id="HNRNPDL">
    <property type="organism name" value="human"/>
</dbReference>
<dbReference type="GeneWiki" id="HNRPDL"/>
<dbReference type="GenomeRNAi" id="9987"/>
<dbReference type="Pharos" id="O14979">
    <property type="development level" value="Tbio"/>
</dbReference>
<dbReference type="PRO" id="PR:O14979"/>
<dbReference type="Proteomes" id="UP000005640">
    <property type="component" value="Chromosome 4"/>
</dbReference>
<dbReference type="RNAct" id="O14979">
    <property type="molecule type" value="protein"/>
</dbReference>
<dbReference type="Bgee" id="ENSG00000152795">
    <property type="expression patterns" value="Expressed in primordial germ cell in gonad and 212 other cell types or tissues"/>
</dbReference>
<dbReference type="ExpressionAtlas" id="O14979">
    <property type="expression patterns" value="baseline and differential"/>
</dbReference>
<dbReference type="GO" id="GO:0000785">
    <property type="term" value="C:chromatin"/>
    <property type="evidence" value="ECO:0000318"/>
    <property type="project" value="GO_Central"/>
</dbReference>
<dbReference type="GO" id="GO:0005829">
    <property type="term" value="C:cytosol"/>
    <property type="evidence" value="ECO:0000304"/>
    <property type="project" value="Reactome"/>
</dbReference>
<dbReference type="GO" id="GO:0005654">
    <property type="term" value="C:nucleoplasm"/>
    <property type="evidence" value="ECO:0000314"/>
    <property type="project" value="HPA"/>
</dbReference>
<dbReference type="GO" id="GO:0005634">
    <property type="term" value="C:nucleus"/>
    <property type="evidence" value="ECO:0000314"/>
    <property type="project" value="UniProtKB"/>
</dbReference>
<dbReference type="GO" id="GO:0005681">
    <property type="term" value="C:spliceosomal complex"/>
    <property type="evidence" value="ECO:0000303"/>
    <property type="project" value="UniProtKB"/>
</dbReference>
<dbReference type="GO" id="GO:0003677">
    <property type="term" value="F:DNA binding"/>
    <property type="evidence" value="ECO:0007669"/>
    <property type="project" value="UniProtKB-KW"/>
</dbReference>
<dbReference type="GO" id="GO:0003690">
    <property type="term" value="F:double-stranded DNA binding"/>
    <property type="evidence" value="ECO:0000314"/>
    <property type="project" value="UniProtKB"/>
</dbReference>
<dbReference type="GO" id="GO:0008143">
    <property type="term" value="F:poly(A) binding"/>
    <property type="evidence" value="ECO:0000314"/>
    <property type="project" value="UniProtKB"/>
</dbReference>
<dbReference type="GO" id="GO:0034046">
    <property type="term" value="F:poly(G) binding"/>
    <property type="evidence" value="ECO:0000314"/>
    <property type="project" value="UniProtKB"/>
</dbReference>
<dbReference type="GO" id="GO:0003723">
    <property type="term" value="F:RNA binding"/>
    <property type="evidence" value="ECO:0007005"/>
    <property type="project" value="UniProtKB"/>
</dbReference>
<dbReference type="GO" id="GO:0003697">
    <property type="term" value="F:single-stranded DNA binding"/>
    <property type="evidence" value="ECO:0000314"/>
    <property type="project" value="UniProtKB"/>
</dbReference>
<dbReference type="GO" id="GO:0010468">
    <property type="term" value="P:regulation of gene expression"/>
    <property type="evidence" value="ECO:0000314"/>
    <property type="project" value="UniProtKB"/>
</dbReference>
<dbReference type="GO" id="GO:0006396">
    <property type="term" value="P:RNA processing"/>
    <property type="evidence" value="ECO:0000303"/>
    <property type="project" value="UniProtKB"/>
</dbReference>
<dbReference type="CDD" id="cd12758">
    <property type="entry name" value="RRM1_hnRPDL"/>
    <property type="match status" value="1"/>
</dbReference>
<dbReference type="CDD" id="cd12585">
    <property type="entry name" value="RRM2_hnRPDL"/>
    <property type="match status" value="1"/>
</dbReference>
<dbReference type="FunFam" id="3.30.70.330:FF:000220">
    <property type="entry name" value="Heterogeneous nuclear ribonucleoprotein D-like protein"/>
    <property type="match status" value="1"/>
</dbReference>
<dbReference type="FunFam" id="3.30.70.330:FF:000030">
    <property type="entry name" value="Heterogeneous nuclear ribonucleoprotein d0 isoform"/>
    <property type="match status" value="1"/>
</dbReference>
<dbReference type="Gene3D" id="3.30.70.330">
    <property type="match status" value="2"/>
</dbReference>
<dbReference type="InterPro" id="IPR034847">
    <property type="entry name" value="hnRPDL_RRM1"/>
</dbReference>
<dbReference type="InterPro" id="IPR012677">
    <property type="entry name" value="Nucleotide-bd_a/b_plait_sf"/>
</dbReference>
<dbReference type="InterPro" id="IPR035979">
    <property type="entry name" value="RBD_domain_sf"/>
</dbReference>
<dbReference type="InterPro" id="IPR000504">
    <property type="entry name" value="RRM_dom"/>
</dbReference>
<dbReference type="PANTHER" id="PTHR48033:SF2">
    <property type="entry name" value="HETEROGENEOUS NUCLEAR RIBONUCLEOPROTEIN D-LIKE"/>
    <property type="match status" value="1"/>
</dbReference>
<dbReference type="PANTHER" id="PTHR48033">
    <property type="entry name" value="RNA-BINDING (RRM/RBD/RNP MOTIFS) FAMILY PROTEIN"/>
    <property type="match status" value="1"/>
</dbReference>
<dbReference type="Pfam" id="PF00076">
    <property type="entry name" value="RRM_1"/>
    <property type="match status" value="2"/>
</dbReference>
<dbReference type="SMART" id="SM00360">
    <property type="entry name" value="RRM"/>
    <property type="match status" value="2"/>
</dbReference>
<dbReference type="SUPFAM" id="SSF54928">
    <property type="entry name" value="RNA-binding domain, RBD"/>
    <property type="match status" value="2"/>
</dbReference>
<dbReference type="PROSITE" id="PS50102">
    <property type="entry name" value="RRM"/>
    <property type="match status" value="2"/>
</dbReference>
<evidence type="ECO:0000250" key="1"/>
<evidence type="ECO:0000250" key="2">
    <source>
        <dbReference type="UniProtKB" id="Q9Z130"/>
    </source>
</evidence>
<evidence type="ECO:0000255" key="3">
    <source>
        <dbReference type="PROSITE-ProRule" id="PRU00176"/>
    </source>
</evidence>
<evidence type="ECO:0000256" key="4">
    <source>
        <dbReference type="SAM" id="MobiDB-lite"/>
    </source>
</evidence>
<evidence type="ECO:0000269" key="5">
    <source>
    </source>
</evidence>
<evidence type="ECO:0000269" key="6">
    <source>
    </source>
</evidence>
<evidence type="ECO:0000269" key="7">
    <source>
    </source>
</evidence>
<evidence type="ECO:0000269" key="8">
    <source>
    </source>
</evidence>
<evidence type="ECO:0000269" key="9">
    <source>
    </source>
</evidence>
<evidence type="ECO:0000269" key="10">
    <source>
    </source>
</evidence>
<evidence type="ECO:0000269" key="11">
    <source ref="9"/>
</evidence>
<evidence type="ECO:0000303" key="12">
    <source>
    </source>
</evidence>
<evidence type="ECO:0000303" key="13">
    <source>
    </source>
</evidence>
<evidence type="ECO:0000303" key="14">
    <source>
    </source>
</evidence>
<evidence type="ECO:0000305" key="15"/>
<evidence type="ECO:0007744" key="16">
    <source>
    </source>
</evidence>
<evidence type="ECO:0007744" key="17">
    <source>
    </source>
</evidence>
<evidence type="ECO:0007744" key="18">
    <source>
    </source>
</evidence>
<evidence type="ECO:0007744" key="19">
    <source>
    </source>
</evidence>
<evidence type="ECO:0007744" key="20">
    <source>
    </source>
</evidence>
<evidence type="ECO:0007744" key="21">
    <source>
    </source>
</evidence>
<evidence type="ECO:0007744" key="22">
    <source>
    </source>
</evidence>
<evidence type="ECO:0007744" key="23">
    <source>
    </source>
</evidence>
<evidence type="ECO:0007744" key="24">
    <source>
    </source>
</evidence>
<evidence type="ECO:0007829" key="25">
    <source>
        <dbReference type="PDB" id="7ZIR"/>
    </source>
</evidence>
<gene>
    <name type="primary">HNRNPDL</name>
    <name type="synonym">HNRPDL</name>
    <name type="synonym">JKTBP</name>
</gene>
<accession>O14979</accession>
<accession>Q6SPF2</accession>
<accession>Q7KZ74</accession>
<accession>Q7KZ75</accession>
<accession>Q96IM0</accession>
<accession>Q96S43</accession>
<reference key="1">
    <citation type="journal article" date="1998" name="J. Biochem.">
        <title>Cloning and characterization of a cDNA encoding a novel heterogeneous nuclear ribonucleoprotein-like protein and its expression in myeloid leukemia cells.</title>
        <authorList>
            <person name="Tsuchiya N."/>
            <person name="Kamei D."/>
            <person name="Takano A."/>
            <person name="Matsui T."/>
            <person name="Yamada M."/>
        </authorList>
    </citation>
    <scope>NUCLEOTIDE SEQUENCE [MRNA] (ISOFORMS 1 AND 2)</scope>
    <scope>FUNCTION</scope>
    <scope>TISSUE SPECIFICITY</scope>
    <scope>RNA-BINDING</scope>
    <scope>DNA-BINDING</scope>
    <source>
        <tissue>Erythroleukemia</tissue>
        <tissue>Placenta</tissue>
    </source>
</reference>
<reference key="2">
    <citation type="journal article" date="1999" name="Gene">
        <title>Two forms of expression and genomic structure of the human heterogeneous nuclear ribonucleoprotein D-like JKTBP gene (HNRPDL).</title>
        <authorList>
            <person name="Kamei D."/>
            <person name="Tsuchiya N."/>
            <person name="Yamazaki M."/>
            <person name="Meguro H."/>
            <person name="Yamada M."/>
        </authorList>
    </citation>
    <scope>NUCLEOTIDE SEQUENCE [MRNA] (ISOFORMS 1 AND 2)</scope>
    <scope>INDUCTION</scope>
    <scope>TISSUE SPECIFICITY</scope>
    <source>
        <tissue>Placenta</tissue>
    </source>
</reference>
<reference key="3">
    <citation type="journal article" date="2002" name="J. Biol. Chem.">
        <title>Identification of the nucleocytoplasmic shuttling sequence of heterogeneous nuclear ribonucleoprotein D-like protein JKTBP and its interaction with mRNA.</title>
        <authorList>
            <person name="Kawamura H."/>
            <person name="Tomozoe Y."/>
            <person name="Akagi T."/>
            <person name="Kamei D."/>
            <person name="Ochiai M."/>
            <person name="Yamada M."/>
        </authorList>
    </citation>
    <scope>NUCLEOTIDE SEQUENCE [MRNA] (ISOFORM 3)</scope>
    <scope>SUBCELLULAR LOCATION</scope>
    <scope>RNA-BINDING</scope>
</reference>
<reference key="4">
    <citation type="submission" date="2004-05" db="EMBL/GenBank/DDBJ databases">
        <title>Cloning of human full open reading frames in Gateway(TM) system entry vector (pDONR201).</title>
        <authorList>
            <person name="Ebert L."/>
            <person name="Schick M."/>
            <person name="Neubert P."/>
            <person name="Schatten R."/>
            <person name="Henze S."/>
            <person name="Korn B."/>
        </authorList>
    </citation>
    <scope>NUCLEOTIDE SEQUENCE [LARGE SCALE MRNA] (ISOFORM 1)</scope>
</reference>
<reference key="5">
    <citation type="journal article" date="2005" name="Nature">
        <title>Generation and annotation of the DNA sequences of human chromosomes 2 and 4.</title>
        <authorList>
            <person name="Hillier L.W."/>
            <person name="Graves T.A."/>
            <person name="Fulton R.S."/>
            <person name="Fulton L.A."/>
            <person name="Pepin K.H."/>
            <person name="Minx P."/>
            <person name="Wagner-McPherson C."/>
            <person name="Layman D."/>
            <person name="Wylie K."/>
            <person name="Sekhon M."/>
            <person name="Becker M.C."/>
            <person name="Fewell G.A."/>
            <person name="Delehaunty K.D."/>
            <person name="Miner T.L."/>
            <person name="Nash W.E."/>
            <person name="Kremitzki C."/>
            <person name="Oddy L."/>
            <person name="Du H."/>
            <person name="Sun H."/>
            <person name="Bradshaw-Cordum H."/>
            <person name="Ali J."/>
            <person name="Carter J."/>
            <person name="Cordes M."/>
            <person name="Harris A."/>
            <person name="Isak A."/>
            <person name="van Brunt A."/>
            <person name="Nguyen C."/>
            <person name="Du F."/>
            <person name="Courtney L."/>
            <person name="Kalicki J."/>
            <person name="Ozersky P."/>
            <person name="Abbott S."/>
            <person name="Armstrong J."/>
            <person name="Belter E.A."/>
            <person name="Caruso L."/>
            <person name="Cedroni M."/>
            <person name="Cotton M."/>
            <person name="Davidson T."/>
            <person name="Desai A."/>
            <person name="Elliott G."/>
            <person name="Erb T."/>
            <person name="Fronick C."/>
            <person name="Gaige T."/>
            <person name="Haakenson W."/>
            <person name="Haglund K."/>
            <person name="Holmes A."/>
            <person name="Harkins R."/>
            <person name="Kim K."/>
            <person name="Kruchowski S.S."/>
            <person name="Strong C.M."/>
            <person name="Grewal N."/>
            <person name="Goyea E."/>
            <person name="Hou S."/>
            <person name="Levy A."/>
            <person name="Martinka S."/>
            <person name="Mead K."/>
            <person name="McLellan M.D."/>
            <person name="Meyer R."/>
            <person name="Randall-Maher J."/>
            <person name="Tomlinson C."/>
            <person name="Dauphin-Kohlberg S."/>
            <person name="Kozlowicz-Reilly A."/>
            <person name="Shah N."/>
            <person name="Swearengen-Shahid S."/>
            <person name="Snider J."/>
            <person name="Strong J.T."/>
            <person name="Thompson J."/>
            <person name="Yoakum M."/>
            <person name="Leonard S."/>
            <person name="Pearman C."/>
            <person name="Trani L."/>
            <person name="Radionenko M."/>
            <person name="Waligorski J.E."/>
            <person name="Wang C."/>
            <person name="Rock S.M."/>
            <person name="Tin-Wollam A.-M."/>
            <person name="Maupin R."/>
            <person name="Latreille P."/>
            <person name="Wendl M.C."/>
            <person name="Yang S.-P."/>
            <person name="Pohl C."/>
            <person name="Wallis J.W."/>
            <person name="Spieth J."/>
            <person name="Bieri T.A."/>
            <person name="Berkowicz N."/>
            <person name="Nelson J.O."/>
            <person name="Osborne J."/>
            <person name="Ding L."/>
            <person name="Meyer R."/>
            <person name="Sabo A."/>
            <person name="Shotland Y."/>
            <person name="Sinha P."/>
            <person name="Wohldmann P.E."/>
            <person name="Cook L.L."/>
            <person name="Hickenbotham M.T."/>
            <person name="Eldred J."/>
            <person name="Williams D."/>
            <person name="Jones T.A."/>
            <person name="She X."/>
            <person name="Ciccarelli F.D."/>
            <person name="Izaurralde E."/>
            <person name="Taylor J."/>
            <person name="Schmutz J."/>
            <person name="Myers R.M."/>
            <person name="Cox D.R."/>
            <person name="Huang X."/>
            <person name="McPherson J.D."/>
            <person name="Mardis E.R."/>
            <person name="Clifton S.W."/>
            <person name="Warren W.C."/>
            <person name="Chinwalla A.T."/>
            <person name="Eddy S.R."/>
            <person name="Marra M.A."/>
            <person name="Ovcharenko I."/>
            <person name="Furey T.S."/>
            <person name="Miller W."/>
            <person name="Eichler E.E."/>
            <person name="Bork P."/>
            <person name="Suyama M."/>
            <person name="Torrents D."/>
            <person name="Waterston R.H."/>
            <person name="Wilson R.K."/>
        </authorList>
    </citation>
    <scope>NUCLEOTIDE SEQUENCE [LARGE SCALE GENOMIC DNA]</scope>
</reference>
<reference key="6">
    <citation type="journal article" date="2004" name="Genome Res.">
        <title>The status, quality, and expansion of the NIH full-length cDNA project: the Mammalian Gene Collection (MGC).</title>
        <authorList>
            <consortium name="The MGC Project Team"/>
        </authorList>
    </citation>
    <scope>NUCLEOTIDE SEQUENCE [LARGE SCALE MRNA] (ISOFORM 1)</scope>
    <source>
        <tissue>Lung</tissue>
        <tissue>Ovary</tissue>
        <tissue>Skin</tissue>
    </source>
</reference>
<reference key="7">
    <citation type="journal article" date="2004" name="J. Biol. Chem.">
        <title>Regulation of murine cytochrome c oxidase Vb gene expression during myogenesis: YY-1 and heterogeneous nuclear ribonucleoprotein D-like protein (JKTBP1) reciprocally regulate transcription activity by physical interaction with the BERF-1/ZBP-89 factor.</title>
        <authorList>
            <person name="Boopathi E."/>
            <person name="Lenka N."/>
            <person name="Prabu S.K."/>
            <person name="Fang J.-K."/>
            <person name="Wilkinson F."/>
            <person name="Atchison M."/>
            <person name="Giallongo A."/>
            <person name="Avadhani N.G."/>
        </authorList>
    </citation>
    <scope>NUCLEOTIDE SEQUENCE [MRNA] OF 123-420</scope>
    <source>
        <tissue>Brain</tissue>
    </source>
</reference>
<reference key="8">
    <citation type="journal article" date="1998" name="Biochim. Biophys. Acta">
        <title>Molecular cloning of the cDNA encoding A + U-rich element RNA binding factor.</title>
        <authorList>
            <person name="Doi A."/>
            <person name="Shiosaka T."/>
            <person name="Takaoka Y."/>
            <person name="Yanagisawa K."/>
            <person name="Fujita S."/>
        </authorList>
    </citation>
    <scope>NUCLEOTIDE SEQUENCE [MRNA] OF 131-420</scope>
    <scope>INTERACTION WITH TNPO1</scope>
    <scope>MUTAGENESIS OF GLY-404</scope>
    <scope>INDUCTION</scope>
    <scope>RNA-BINDING</scope>
</reference>
<reference key="9">
    <citation type="submission" date="2008-12" db="UniProtKB">
        <authorList>
            <person name="Bienvenut W.V."/>
            <person name="Zebisch A."/>
            <person name="Lilla S."/>
            <person name="von Kriegsheim A."/>
            <person name="Lempens A."/>
            <person name="Kolch W."/>
        </authorList>
    </citation>
    <scope>PROTEIN SEQUENCE OF 150-180; 190-209; 234-269; 275-289 AND 406-420</scope>
    <scope>METHYLATION AT LYS-161 AND ARG-408</scope>
    <scope>IDENTIFICATION BY MASS SPECTROMETRY</scope>
    <source>
        <tissue>Colon carcinoma</tissue>
        <tissue>Ovarian carcinoma</tissue>
    </source>
</reference>
<reference key="10">
    <citation type="submission" date="2008-12" db="UniProtKB">
        <authorList>
            <person name="Lubec G."/>
            <person name="Chen W.-Q."/>
            <person name="Sun Y."/>
        </authorList>
    </citation>
    <scope>PROTEIN SEQUENCE OF 235-269 AND 275-289</scope>
    <source>
        <tissue>Fetal brain cortex</tissue>
    </source>
</reference>
<reference key="11">
    <citation type="journal article" date="2002" name="Gene">
        <title>Interactions of heterogeneous nuclear ribonucleoprotein D-like protein JKTBP and its domains with high-affinity binding sites.</title>
        <authorList>
            <person name="Kamei D."/>
            <person name="Yamada M."/>
        </authorList>
    </citation>
    <scope>SUBCELLULAR LOCATION</scope>
    <scope>RNA-BINDING</scope>
</reference>
<reference key="12">
    <citation type="journal article" date="2006" name="Cell">
        <title>Global, in vivo, and site-specific phosphorylation dynamics in signaling networks.</title>
        <authorList>
            <person name="Olsen J.V."/>
            <person name="Blagoev B."/>
            <person name="Gnad F."/>
            <person name="Macek B."/>
            <person name="Kumar C."/>
            <person name="Mortensen P."/>
            <person name="Mann M."/>
        </authorList>
    </citation>
    <scope>PHOSPHORYLATION [LARGE SCALE ANALYSIS] AT SER-241</scope>
    <scope>IDENTIFICATION BY MASS SPECTROMETRY [LARGE SCALE ANALYSIS]</scope>
    <source>
        <tissue>Cervix carcinoma</tissue>
    </source>
</reference>
<reference key="13">
    <citation type="journal article" date="2009" name="Anal. Chem.">
        <title>Lys-N and trypsin cover complementary parts of the phosphoproteome in a refined SCX-based approach.</title>
        <authorList>
            <person name="Gauci S."/>
            <person name="Helbig A.O."/>
            <person name="Slijper M."/>
            <person name="Krijgsveld J."/>
            <person name="Heck A.J."/>
            <person name="Mohammed S."/>
        </authorList>
    </citation>
    <scope>IDENTIFICATION BY MASS SPECTROMETRY [LARGE SCALE ANALYSIS]</scope>
</reference>
<reference key="14">
    <citation type="journal article" date="2009" name="Sci. Signal.">
        <title>Quantitative phosphoproteomic analysis of T cell receptor signaling reveals system-wide modulation of protein-protein interactions.</title>
        <authorList>
            <person name="Mayya V."/>
            <person name="Lundgren D.H."/>
            <person name="Hwang S.-I."/>
            <person name="Rezaul K."/>
            <person name="Wu L."/>
            <person name="Eng J.K."/>
            <person name="Rodionov V."/>
            <person name="Han D.K."/>
        </authorList>
    </citation>
    <scope>PHOSPHORYLATION [LARGE SCALE ANALYSIS] AT SER-241</scope>
    <scope>IDENTIFICATION BY MASS SPECTROMETRY [LARGE SCALE ANALYSIS]</scope>
    <source>
        <tissue>Leukemic T-cell</tissue>
    </source>
</reference>
<reference key="15">
    <citation type="journal article" date="2009" name="Science">
        <title>Lysine acetylation targets protein complexes and co-regulates major cellular functions.</title>
        <authorList>
            <person name="Choudhary C."/>
            <person name="Kumar C."/>
            <person name="Gnad F."/>
            <person name="Nielsen M.L."/>
            <person name="Rehman M."/>
            <person name="Walther T.C."/>
            <person name="Olsen J.V."/>
            <person name="Mann M."/>
        </authorList>
    </citation>
    <scope>ACETYLATION [LARGE SCALE ANALYSIS] AT LYS-216</scope>
    <scope>IDENTIFICATION BY MASS SPECTROMETRY [LARGE SCALE ANALYSIS]</scope>
</reference>
<reference key="16">
    <citation type="journal article" date="2010" name="Sci. Signal.">
        <title>Quantitative phosphoproteomics reveals widespread full phosphorylation site occupancy during mitosis.</title>
        <authorList>
            <person name="Olsen J.V."/>
            <person name="Vermeulen M."/>
            <person name="Santamaria A."/>
            <person name="Kumar C."/>
            <person name="Miller M.L."/>
            <person name="Jensen L.J."/>
            <person name="Gnad F."/>
            <person name="Cox J."/>
            <person name="Jensen T.S."/>
            <person name="Nigg E.A."/>
            <person name="Brunak S."/>
            <person name="Mann M."/>
        </authorList>
    </citation>
    <scope>PHOSPHORYLATION [LARGE SCALE ANALYSIS] AT SER-241</scope>
    <scope>IDENTIFICATION BY MASS SPECTROMETRY [LARGE SCALE ANALYSIS]</scope>
    <source>
        <tissue>Cervix carcinoma</tissue>
    </source>
</reference>
<reference key="17">
    <citation type="journal article" date="2011" name="BMC Syst. Biol.">
        <title>Initial characterization of the human central proteome.</title>
        <authorList>
            <person name="Burkard T.R."/>
            <person name="Planyavsky M."/>
            <person name="Kaupe I."/>
            <person name="Breitwieser F.P."/>
            <person name="Buerckstuemmer T."/>
            <person name="Bennett K.L."/>
            <person name="Superti-Furga G."/>
            <person name="Colinge J."/>
        </authorList>
    </citation>
    <scope>IDENTIFICATION BY MASS SPECTROMETRY [LARGE SCALE ANALYSIS]</scope>
</reference>
<reference key="18">
    <citation type="journal article" date="2011" name="Sci. Signal.">
        <title>System-wide temporal characterization of the proteome and phosphoproteome of human embryonic stem cell differentiation.</title>
        <authorList>
            <person name="Rigbolt K.T."/>
            <person name="Prokhorova T.A."/>
            <person name="Akimov V."/>
            <person name="Henningsen J."/>
            <person name="Johansen P.T."/>
            <person name="Kratchmarova I."/>
            <person name="Kassem M."/>
            <person name="Mann M."/>
            <person name="Olsen J.V."/>
            <person name="Blagoev B."/>
        </authorList>
    </citation>
    <scope>PHOSPHORYLATION [LARGE SCALE ANALYSIS] AT SER-241</scope>
    <scope>IDENTIFICATION BY MASS SPECTROMETRY [LARGE SCALE ANALYSIS]</scope>
</reference>
<reference key="19">
    <citation type="journal article" date="2013" name="J. Proteome Res.">
        <title>Toward a comprehensive characterization of a human cancer cell phosphoproteome.</title>
        <authorList>
            <person name="Zhou H."/>
            <person name="Di Palma S."/>
            <person name="Preisinger C."/>
            <person name="Peng M."/>
            <person name="Polat A.N."/>
            <person name="Heck A.J."/>
            <person name="Mohammed S."/>
        </authorList>
    </citation>
    <scope>PHOSPHORYLATION [LARGE SCALE ANALYSIS] AT SER-241</scope>
    <scope>IDENTIFICATION BY MASS SPECTROMETRY [LARGE SCALE ANALYSIS]</scope>
    <source>
        <tissue>Cervix carcinoma</tissue>
        <tissue>Erythroleukemia</tissue>
    </source>
</reference>
<reference key="20">
    <citation type="journal article" date="2014" name="Hum. Mol. Genet.">
        <title>A defect in the RNA-processing protein HNRPDL causes limb-girdle muscular dystrophy 1G (LGMD1G).</title>
        <authorList>
            <person name="Vieira N.M."/>
            <person name="Naslavsky M.S."/>
            <person name="Licinio L."/>
            <person name="Kok F."/>
            <person name="Schlesinger D."/>
            <person name="Vainzof M."/>
            <person name="Sanchez N."/>
            <person name="Kitajima J.P."/>
            <person name="Gal L."/>
            <person name="Cavacana N."/>
            <person name="Serafini P.R."/>
            <person name="Chuartzman S."/>
            <person name="Vasquez C."/>
            <person name="Mimbacas A."/>
            <person name="Nigro V."/>
            <person name="Pavanello R.C."/>
            <person name="Schuldiner M."/>
            <person name="Kunkel L.M."/>
            <person name="Zatz M."/>
        </authorList>
    </citation>
    <scope>INVOLVEMENT IN LGMDD3</scope>
    <scope>VARIANTS LGMDD3 ASN-378 AND HIS-378</scope>
</reference>
<reference key="21">
    <citation type="journal article" date="2014" name="J. Proteomics">
        <title>An enzyme assisted RP-RPLC approach for in-depth analysis of human liver phosphoproteome.</title>
        <authorList>
            <person name="Bian Y."/>
            <person name="Song C."/>
            <person name="Cheng K."/>
            <person name="Dong M."/>
            <person name="Wang F."/>
            <person name="Huang J."/>
            <person name="Sun D."/>
            <person name="Wang L."/>
            <person name="Ye M."/>
            <person name="Zou H."/>
        </authorList>
    </citation>
    <scope>PHOSPHORYLATION [LARGE SCALE ANALYSIS] AT SER-241</scope>
    <scope>IDENTIFICATION BY MASS SPECTROMETRY [LARGE SCALE ANALYSIS]</scope>
    <source>
        <tissue>Liver</tissue>
    </source>
</reference>
<reference key="22">
    <citation type="journal article" date="2014" name="Mol. Cell. Proteomics">
        <title>Immunoaffinity enrichment and mass spectrometry analysis of protein methylation.</title>
        <authorList>
            <person name="Guo A."/>
            <person name="Gu H."/>
            <person name="Zhou J."/>
            <person name="Mulhern D."/>
            <person name="Wang Y."/>
            <person name="Lee K.A."/>
            <person name="Yang V."/>
            <person name="Aguiar M."/>
            <person name="Kornhauser J."/>
            <person name="Jia X."/>
            <person name="Ren J."/>
            <person name="Beausoleil S.A."/>
            <person name="Silva J.C."/>
            <person name="Vemulapalli V."/>
            <person name="Bedford M.T."/>
            <person name="Comb M.J."/>
        </authorList>
    </citation>
    <scope>METHYLATION [LARGE SCALE ANALYSIS] AT ARG-25</scope>
    <scope>IDENTIFICATION BY MASS SPECTROMETRY [LARGE SCALE ANALYSIS]</scope>
    <source>
        <tissue>Colon carcinoma</tissue>
    </source>
</reference>
<reference key="23">
    <citation type="journal article" date="2017" name="Nat. Struct. Mol. Biol.">
        <title>Site-specific mapping of the human SUMO proteome reveals co-modification with phosphorylation.</title>
        <authorList>
            <person name="Hendriks I.A."/>
            <person name="Lyon D."/>
            <person name="Young C."/>
            <person name="Jensen L.J."/>
            <person name="Vertegaal A.C."/>
            <person name="Nielsen M.L."/>
        </authorList>
    </citation>
    <scope>SUMOYLATION [LARGE SCALE ANALYSIS] AT LYS-209</scope>
    <scope>IDENTIFICATION BY MASS SPECTROMETRY [LARGE SCALE ANALYSIS]</scope>
</reference>
<comment type="function">
    <text evidence="1 10">Acts as a transcriptional regulator. Promotes transcription repression. Promotes transcription activation in differentiated myotubes (By similarity). Binds to double- and single-stranded DNA sequences. Binds to the transcription suppressor CATR sequence of the COX5B promoter (By similarity). Binds with high affinity to RNA molecules that contain AU-rich elements (AREs) found within the 3'-UTR of many proto-oncogenes and cytokine mRNAs. Binds both to nuclear and cytoplasmic poly(A) mRNAs. Binds to poly(G) and poly(A), but not to poly(U) or poly(C) RNA homopolymers. Binds to the 5'-ACUAGC-3' RNA consensus sequence.</text>
</comment>
<comment type="subunit">
    <text evidence="1 9">Interacts with ZNF148 (By similarity). Interacts with TNPO1.</text>
</comment>
<comment type="interaction">
    <interactant intactId="EBI-299727">
        <id>O14979</id>
    </interactant>
    <interactant intactId="EBI-299649">
        <id>P22626</id>
        <label>HNRNPA2B1</label>
    </interactant>
    <organismsDiffer>false</organismsDiffer>
    <experiments>2</experiments>
</comment>
<comment type="interaction">
    <interactant intactId="EBI-299727">
        <id>O14979</id>
    </interactant>
    <interactant intactId="EBI-299674">
        <id>Q14103</id>
        <label>HNRNPD</label>
    </interactant>
    <organismsDiffer>false</organismsDiffer>
    <experiments>2</experiments>
</comment>
<comment type="interaction">
    <interactant intactId="EBI-299727">
        <id>O14979</id>
    </interactant>
    <interactant intactId="EBI-744603">
        <id>Q15637</id>
        <label>SF1</label>
    </interactant>
    <organismsDiffer>false</organismsDiffer>
    <experiments>4</experiments>
</comment>
<comment type="interaction">
    <interactant intactId="EBI-299727">
        <id>O14979</id>
    </interactant>
    <interactant intactId="EBI-766589">
        <id>P09234</id>
        <label>SNRPC</label>
    </interactant>
    <organismsDiffer>false</organismsDiffer>
    <experiments>4</experiments>
</comment>
<comment type="interaction">
    <interactant intactId="EBI-299727">
        <id>O14979</id>
    </interactant>
    <interactant intactId="EBI-372899">
        <id>Q13148</id>
        <label>TARDBP</label>
    </interactant>
    <organismsDiffer>false</organismsDiffer>
    <experiments>3</experiments>
</comment>
<comment type="interaction">
    <interactant intactId="EBI-299727">
        <id>O14979</id>
    </interactant>
    <interactant intactId="EBI-720609">
        <id>O76024</id>
        <label>WFS1</label>
    </interactant>
    <organismsDiffer>false</organismsDiffer>
    <experiments>3</experiments>
</comment>
<comment type="subcellular location">
    <subcellularLocation>
        <location evidence="6 7">Nucleus</location>
    </subcellularLocation>
    <subcellularLocation>
        <location evidence="6 7">Cytoplasm</location>
    </subcellularLocation>
    <text evidence="6 7">Shuttles between the nucleus and the cytoplasm in a TNPO1-dependent manner.</text>
</comment>
<comment type="alternative products">
    <event type="alternative splicing"/>
    <isoform>
        <id>O14979-1</id>
        <name>1</name>
        <name evidence="12">JKTBP2</name>
        <sequence type="displayed"/>
    </isoform>
    <isoform>
        <id>O14979-2</id>
        <name>2</name>
        <name evidence="12">JKTBP1</name>
        <sequence type="described" ref="VSP_025410"/>
    </isoform>
    <isoform>
        <id>O14979-3</id>
        <name>3</name>
        <sequence type="described" ref="VSP_025410 VSP_025411"/>
    </isoform>
</comment>
<comment type="tissue specificity">
    <text evidence="5 10">Expressed in heart, brain, placenta, lung, liver, skeletal muscle, kidney, pancreas, spleen, thymus, prostate, testis, ovary, small intestine, colon and leukocytes. Expressed in myeloid leukemia, gastric adenocarcinoma, cervical carcinoma, hepatoma, fibrosarcoma, colon adenocarcinoma, epidermoid carcinoma, osteosarcoma and urinary bladder carcinoma cells.</text>
</comment>
<comment type="induction">
    <text evidence="5 9">Up-regulated by 12-O-tetradecanoylphorbol-13-acetate (TPA) in macrophages and retinoic acid (RA) in granulocytes (at protein level). Down-regulated by IL4/interleukin-4.</text>
</comment>
<comment type="PTM">
    <text>Dimethylation of Arg-408 is probably of the asymmetric type.</text>
</comment>
<comment type="disease" evidence="8">
    <disease id="DI-04211">
        <name>Muscular dystrophy, limb-girdle, autosomal dominant 3</name>
        <acronym>LGMDD3</acronym>
        <description>An autosomal dominant degenerative myopathy characterized by slowly progressive wasting and weakness of the proximal muscles of arms and legs around the pelvic or shoulder girdles, elevated creatine kinase levels and dystrophic features on muscle biopsy. LGMDD3 is characterized by a mild late-onset and is associated with progressive fingers and toes flexion limitation. Affected individuals may also develop cataracts before age 50.</description>
        <dbReference type="MIM" id="609115"/>
    </disease>
    <text>The disease is caused by variants affecting the gene represented in this entry.</text>
</comment>
<comment type="sequence caution" evidence="15">
    <conflict type="erroneous initiation">
        <sequence resource="EMBL-CDS" id="BAA22860"/>
    </conflict>
    <text>Truncated N-terminus.</text>
</comment>
<sequence length="420" mass="46438">MEVPPRLSHVPPPLFPSAPATLASRSLSHWRPRPPRQLAPLLPSLAPSSARQGARRAQRHVTAQQPSRLAGGAAIKGGRRRRPDLFRRHFKSSSIQRSAAAAAATRTARQHPPADSSVTMEDMNEYSNIEEFAEGSKINASKNQQDDGKMFIGGLSWDTSKKDLTEYLSRFGEVVDCTIKTDPVTGRSRGFGFVLFKDAASVDKVLELKEHKLDGKLIDPKRAKALKGKEPPKKVFVGGLSPDTSEEQIKEYFGAFGEIENIELPMDTKTNERRGFCFITYTDEEPVKKLLESRYHQIGSGKCEIKVAQPKEVYRQQQQQQKGGRGAAAGGRGGTRGRGRGQGQNWNQGFNNYYDQGYGNYNSAYGGDQNYSGYGGYDYTGYNYGNYGYGQGYADYSGQQSTYGKASRGGGNHQNNYQPY</sequence>